<organism>
    <name type="scientific">Drosophila persimilis</name>
    <name type="common">Fruit fly</name>
    <dbReference type="NCBI Taxonomy" id="7234"/>
    <lineage>
        <taxon>Eukaryota</taxon>
        <taxon>Metazoa</taxon>
        <taxon>Ecdysozoa</taxon>
        <taxon>Arthropoda</taxon>
        <taxon>Hexapoda</taxon>
        <taxon>Insecta</taxon>
        <taxon>Pterygota</taxon>
        <taxon>Neoptera</taxon>
        <taxon>Endopterygota</taxon>
        <taxon>Diptera</taxon>
        <taxon>Brachycera</taxon>
        <taxon>Muscomorpha</taxon>
        <taxon>Ephydroidea</taxon>
        <taxon>Drosophilidae</taxon>
        <taxon>Drosophila</taxon>
        <taxon>Sophophora</taxon>
    </lineage>
</organism>
<gene>
    <name type="primary">RpS21</name>
    <name type="synonym">oho23B</name>
    <name type="ORF">GL26288</name>
</gene>
<dbReference type="EMBL" id="CH479189">
    <property type="protein sequence ID" value="EDW25667.1"/>
    <property type="molecule type" value="Genomic_DNA"/>
</dbReference>
<dbReference type="SMR" id="B4GSC0"/>
<dbReference type="STRING" id="7234.B4GSC0"/>
<dbReference type="EnsemblMetazoa" id="FBtr0191903">
    <property type="protein sequence ID" value="FBpp0190395"/>
    <property type="gene ID" value="FBgn0163870"/>
</dbReference>
<dbReference type="EnsemblMetazoa" id="XM_002021788.2">
    <property type="protein sequence ID" value="XP_002021824.1"/>
    <property type="gene ID" value="LOC6596426"/>
</dbReference>
<dbReference type="GeneID" id="6596426"/>
<dbReference type="KEGG" id="dpe:6596426"/>
<dbReference type="CTD" id="6227"/>
<dbReference type="eggNOG" id="KOG3486">
    <property type="taxonomic scope" value="Eukaryota"/>
</dbReference>
<dbReference type="HOGENOM" id="CLU_167122_2_0_1"/>
<dbReference type="OMA" id="GESDACM"/>
<dbReference type="OrthoDB" id="278325at2759"/>
<dbReference type="PhylomeDB" id="B4GSC0"/>
<dbReference type="ChiTaRS" id="RpS21">
    <property type="organism name" value="fly"/>
</dbReference>
<dbReference type="Proteomes" id="UP000008744">
    <property type="component" value="Unassembled WGS sequence"/>
</dbReference>
<dbReference type="GO" id="GO:0022626">
    <property type="term" value="C:cytosolic ribosome"/>
    <property type="evidence" value="ECO:0007669"/>
    <property type="project" value="EnsemblMetazoa"/>
</dbReference>
<dbReference type="GO" id="GO:1990904">
    <property type="term" value="C:ribonucleoprotein complex"/>
    <property type="evidence" value="ECO:0007669"/>
    <property type="project" value="UniProtKB-KW"/>
</dbReference>
<dbReference type="GO" id="GO:0005840">
    <property type="term" value="C:ribosome"/>
    <property type="evidence" value="ECO:0000250"/>
    <property type="project" value="UniProtKB"/>
</dbReference>
<dbReference type="GO" id="GO:0005791">
    <property type="term" value="C:rough endoplasmic reticulum"/>
    <property type="evidence" value="ECO:0007669"/>
    <property type="project" value="UniProtKB-SubCell"/>
</dbReference>
<dbReference type="GO" id="GO:0043022">
    <property type="term" value="F:ribosome binding"/>
    <property type="evidence" value="ECO:0000250"/>
    <property type="project" value="UniProtKB"/>
</dbReference>
<dbReference type="GO" id="GO:0003735">
    <property type="term" value="F:structural constituent of ribosome"/>
    <property type="evidence" value="ECO:0007669"/>
    <property type="project" value="EnsemblMetazoa"/>
</dbReference>
<dbReference type="GO" id="GO:0048542">
    <property type="term" value="P:lymph gland development"/>
    <property type="evidence" value="ECO:0007669"/>
    <property type="project" value="EnsemblMetazoa"/>
</dbReference>
<dbReference type="GO" id="GO:0042127">
    <property type="term" value="P:regulation of cell population proliferation"/>
    <property type="evidence" value="ECO:0000250"/>
    <property type="project" value="UniProtKB"/>
</dbReference>
<dbReference type="GO" id="GO:0006417">
    <property type="term" value="P:regulation of translation"/>
    <property type="evidence" value="ECO:0007669"/>
    <property type="project" value="UniProtKB-KW"/>
</dbReference>
<dbReference type="GO" id="GO:0006364">
    <property type="term" value="P:rRNA processing"/>
    <property type="evidence" value="ECO:0007669"/>
    <property type="project" value="UniProtKB-KW"/>
</dbReference>
<dbReference type="GO" id="GO:0006412">
    <property type="term" value="P:translation"/>
    <property type="evidence" value="ECO:0007669"/>
    <property type="project" value="InterPro"/>
</dbReference>
<dbReference type="FunFam" id="3.30.1230.20:FF:000001">
    <property type="entry name" value="40S ribosomal protein S21"/>
    <property type="match status" value="1"/>
</dbReference>
<dbReference type="Gene3D" id="3.30.1230.20">
    <property type="match status" value="1"/>
</dbReference>
<dbReference type="InterPro" id="IPR001931">
    <property type="entry name" value="Ribosomal_eS21"/>
</dbReference>
<dbReference type="InterPro" id="IPR018279">
    <property type="entry name" value="Ribosomal_eS21_CS"/>
</dbReference>
<dbReference type="InterPro" id="IPR038579">
    <property type="entry name" value="Ribosomal_eS21_sf"/>
</dbReference>
<dbReference type="PANTHER" id="PTHR10442">
    <property type="entry name" value="40S RIBOSOMAL PROTEIN S21"/>
    <property type="match status" value="1"/>
</dbReference>
<dbReference type="Pfam" id="PF01249">
    <property type="entry name" value="Ribosomal_S21e"/>
    <property type="match status" value="1"/>
</dbReference>
<dbReference type="PIRSF" id="PIRSF002148">
    <property type="entry name" value="Ribosomal_S21e"/>
    <property type="match status" value="1"/>
</dbReference>
<dbReference type="PROSITE" id="PS00996">
    <property type="entry name" value="RIBOSOMAL_S21E"/>
    <property type="match status" value="1"/>
</dbReference>
<proteinExistence type="inferred from homology"/>
<comment type="function">
    <text evidence="1">May be an associated component of the ribosome rather than a core structural subunit. May act as a translation initiation factor. Has a role in regulation of cell proliferation in the hematopoietic organs and the imaginal disks of larva (By similarity).</text>
</comment>
<comment type="subunit">
    <text evidence="1">Component of the 40S small ribosomal subunit. Interacts with sta.</text>
</comment>
<comment type="subcellular location">
    <subcellularLocation>
        <location evidence="2">Cytoplasm</location>
        <location evidence="2">Cytosol</location>
    </subcellularLocation>
    <subcellularLocation>
        <location evidence="2">Cytoplasm</location>
    </subcellularLocation>
    <subcellularLocation>
        <location evidence="3">Rough endoplasmic reticulum</location>
    </subcellularLocation>
    <text evidence="2 3">Detected on cytosolic polysomes (By similarity). Detected in ribosomes that are associated with the rough endoplasmic reticulum (By similarity).</text>
</comment>
<comment type="similarity">
    <text evidence="4">Belongs to the eukaryotic ribosomal protein eS21 family.</text>
</comment>
<evidence type="ECO:0000250" key="1">
    <source>
        <dbReference type="UniProtKB" id="O76927"/>
    </source>
</evidence>
<evidence type="ECO:0000250" key="2">
    <source>
        <dbReference type="UniProtKB" id="P63220"/>
    </source>
</evidence>
<evidence type="ECO:0000250" key="3">
    <source>
        <dbReference type="UniProtKB" id="P63221"/>
    </source>
</evidence>
<evidence type="ECO:0000255" key="4"/>
<evidence type="ECO:0000305" key="5"/>
<evidence type="ECO:0000312" key="6">
    <source>
        <dbReference type="EMBL" id="EDW25667.1"/>
    </source>
</evidence>
<name>RS21_DROPE</name>
<sequence length="83" mass="9167">MENDAGENVDLYVPRKCSASNRIIHAKDHASVQLSIVDVDPETGRQTDGSKTYAICGEIRRMGESDDCIVRLAKKDGLITKNF</sequence>
<feature type="chain" id="PRO_0000395420" description="Small ribosomal subunit protein eS21">
    <location>
        <begin position="1"/>
        <end position="83"/>
    </location>
</feature>
<protein>
    <recommendedName>
        <fullName evidence="5">Small ribosomal subunit protein eS21</fullName>
    </recommendedName>
    <alternativeName>
        <fullName evidence="1">40S ribosomal protein S21</fullName>
    </alternativeName>
    <alternativeName>
        <fullName evidence="1">Overgrown hematopoietic organs at 23B</fullName>
    </alternativeName>
</protein>
<keyword id="KW-0963">Cytoplasm</keyword>
<keyword id="KW-0217">Developmental protein</keyword>
<keyword id="KW-0256">Endoplasmic reticulum</keyword>
<keyword id="KW-1185">Reference proteome</keyword>
<keyword id="KW-0687">Ribonucleoprotein</keyword>
<keyword id="KW-0689">Ribosomal protein</keyword>
<keyword id="KW-0698">rRNA processing</keyword>
<keyword id="KW-0810">Translation regulation</keyword>
<accession>B4GSC0</accession>
<reference evidence="6" key="1">
    <citation type="journal article" date="2007" name="Nature">
        <title>Evolution of genes and genomes on the Drosophila phylogeny.</title>
        <authorList>
            <consortium name="Drosophila 12 genomes consortium"/>
        </authorList>
    </citation>
    <scope>NUCLEOTIDE SEQUENCE [LARGE SCALE GENOMIC DNA]</scope>
    <source>
        <strain evidence="6">MSH-3 / Tucson 14011-0111.49</strain>
    </source>
</reference>